<comment type="function">
    <text evidence="1">Could be a nuclease involved in processing of the 5'-end of pre-16S rRNA.</text>
</comment>
<comment type="subcellular location">
    <subcellularLocation>
        <location evidence="1">Cytoplasm</location>
    </subcellularLocation>
</comment>
<comment type="similarity">
    <text evidence="1">Belongs to the YqgF nuclease family.</text>
</comment>
<reference key="1">
    <citation type="journal article" date="2009" name="Appl. Environ. Microbiol.">
        <title>Three genomes from the phylum Acidobacteria provide insight into the lifestyles of these microorganisms in soils.</title>
        <authorList>
            <person name="Ward N.L."/>
            <person name="Challacombe J.F."/>
            <person name="Janssen P.H."/>
            <person name="Henrissat B."/>
            <person name="Coutinho P.M."/>
            <person name="Wu M."/>
            <person name="Xie G."/>
            <person name="Haft D.H."/>
            <person name="Sait M."/>
            <person name="Badger J."/>
            <person name="Barabote R.D."/>
            <person name="Bradley B."/>
            <person name="Brettin T.S."/>
            <person name="Brinkac L.M."/>
            <person name="Bruce D."/>
            <person name="Creasy T."/>
            <person name="Daugherty S.C."/>
            <person name="Davidsen T.M."/>
            <person name="DeBoy R.T."/>
            <person name="Detter J.C."/>
            <person name="Dodson R.J."/>
            <person name="Durkin A.S."/>
            <person name="Ganapathy A."/>
            <person name="Gwinn-Giglio M."/>
            <person name="Han C.S."/>
            <person name="Khouri H."/>
            <person name="Kiss H."/>
            <person name="Kothari S.P."/>
            <person name="Madupu R."/>
            <person name="Nelson K.E."/>
            <person name="Nelson W.C."/>
            <person name="Paulsen I."/>
            <person name="Penn K."/>
            <person name="Ren Q."/>
            <person name="Rosovitz M.J."/>
            <person name="Selengut J.D."/>
            <person name="Shrivastava S."/>
            <person name="Sullivan S.A."/>
            <person name="Tapia R."/>
            <person name="Thompson L.S."/>
            <person name="Watkins K.L."/>
            <person name="Yang Q."/>
            <person name="Yu C."/>
            <person name="Zafar N."/>
            <person name="Zhou L."/>
            <person name="Kuske C.R."/>
        </authorList>
    </citation>
    <scope>NUCLEOTIDE SEQUENCE [LARGE SCALE GENOMIC DNA]</scope>
    <source>
        <strain>Ellin345</strain>
    </source>
</reference>
<keyword id="KW-0963">Cytoplasm</keyword>
<keyword id="KW-0378">Hydrolase</keyword>
<keyword id="KW-0540">Nuclease</keyword>
<keyword id="KW-1185">Reference proteome</keyword>
<keyword id="KW-0690">Ribosome biogenesis</keyword>
<sequence>MKEPSAVHGRILALDFGTRRIGLAVSDPLGITAQGLQTLLRKNKRTDLAALRSVIEQNEIREIVVGLPLRLSGADSSSTEKAREFAAWLEKEFALPVHMWDERFTSVEANRVLRESEMSIKKRGEAVDRLSAVLILQAFLERRGIDREEPLSS</sequence>
<dbReference type="EC" id="3.1.-.-" evidence="1"/>
<dbReference type="EMBL" id="CP000360">
    <property type="protein sequence ID" value="ABF39561.1"/>
    <property type="molecule type" value="Genomic_DNA"/>
</dbReference>
<dbReference type="RefSeq" id="WP_011521363.1">
    <property type="nucleotide sequence ID" value="NC_008009.1"/>
</dbReference>
<dbReference type="SMR" id="Q1IU89"/>
<dbReference type="STRING" id="204669.Acid345_0556"/>
<dbReference type="EnsemblBacteria" id="ABF39561">
    <property type="protein sequence ID" value="ABF39561"/>
    <property type="gene ID" value="Acid345_0556"/>
</dbReference>
<dbReference type="KEGG" id="aba:Acid345_0556"/>
<dbReference type="eggNOG" id="COG0816">
    <property type="taxonomic scope" value="Bacteria"/>
</dbReference>
<dbReference type="HOGENOM" id="CLU_098240_2_0_0"/>
<dbReference type="OrthoDB" id="9796140at2"/>
<dbReference type="Proteomes" id="UP000002432">
    <property type="component" value="Chromosome"/>
</dbReference>
<dbReference type="GO" id="GO:0005829">
    <property type="term" value="C:cytosol"/>
    <property type="evidence" value="ECO:0007669"/>
    <property type="project" value="TreeGrafter"/>
</dbReference>
<dbReference type="GO" id="GO:0004518">
    <property type="term" value="F:nuclease activity"/>
    <property type="evidence" value="ECO:0007669"/>
    <property type="project" value="UniProtKB-KW"/>
</dbReference>
<dbReference type="GO" id="GO:0000967">
    <property type="term" value="P:rRNA 5'-end processing"/>
    <property type="evidence" value="ECO:0007669"/>
    <property type="project" value="UniProtKB-UniRule"/>
</dbReference>
<dbReference type="CDD" id="cd16964">
    <property type="entry name" value="YqgF"/>
    <property type="match status" value="1"/>
</dbReference>
<dbReference type="Gene3D" id="3.30.420.140">
    <property type="entry name" value="YqgF/RNase H-like domain"/>
    <property type="match status" value="1"/>
</dbReference>
<dbReference type="HAMAP" id="MF_00651">
    <property type="entry name" value="Nuclease_YqgF"/>
    <property type="match status" value="1"/>
</dbReference>
<dbReference type="InterPro" id="IPR012337">
    <property type="entry name" value="RNaseH-like_sf"/>
</dbReference>
<dbReference type="InterPro" id="IPR005227">
    <property type="entry name" value="YqgF"/>
</dbReference>
<dbReference type="InterPro" id="IPR006641">
    <property type="entry name" value="YqgF/RNaseH-like_dom"/>
</dbReference>
<dbReference type="InterPro" id="IPR037027">
    <property type="entry name" value="YqgF/RNaseH-like_dom_sf"/>
</dbReference>
<dbReference type="NCBIfam" id="TIGR00250">
    <property type="entry name" value="RNAse_H_YqgF"/>
    <property type="match status" value="1"/>
</dbReference>
<dbReference type="PANTHER" id="PTHR33317">
    <property type="entry name" value="POLYNUCLEOTIDYL TRANSFERASE, RIBONUCLEASE H-LIKE SUPERFAMILY PROTEIN"/>
    <property type="match status" value="1"/>
</dbReference>
<dbReference type="PANTHER" id="PTHR33317:SF4">
    <property type="entry name" value="POLYNUCLEOTIDYL TRANSFERASE, RIBONUCLEASE H-LIKE SUPERFAMILY PROTEIN"/>
    <property type="match status" value="1"/>
</dbReference>
<dbReference type="Pfam" id="PF03652">
    <property type="entry name" value="RuvX"/>
    <property type="match status" value="1"/>
</dbReference>
<dbReference type="SMART" id="SM00732">
    <property type="entry name" value="YqgFc"/>
    <property type="match status" value="1"/>
</dbReference>
<dbReference type="SUPFAM" id="SSF53098">
    <property type="entry name" value="Ribonuclease H-like"/>
    <property type="match status" value="1"/>
</dbReference>
<accession>Q1IU89</accession>
<name>YQGF_KORVE</name>
<gene>
    <name type="ordered locus">Acid345_0556</name>
</gene>
<feature type="chain" id="PRO_0000257498" description="Putative pre-16S rRNA nuclease">
    <location>
        <begin position="1"/>
        <end position="153"/>
    </location>
</feature>
<proteinExistence type="inferred from homology"/>
<evidence type="ECO:0000255" key="1">
    <source>
        <dbReference type="HAMAP-Rule" id="MF_00651"/>
    </source>
</evidence>
<protein>
    <recommendedName>
        <fullName evidence="1">Putative pre-16S rRNA nuclease</fullName>
        <ecNumber evidence="1">3.1.-.-</ecNumber>
    </recommendedName>
</protein>
<organism>
    <name type="scientific">Koribacter versatilis (strain Ellin345)</name>
    <dbReference type="NCBI Taxonomy" id="204669"/>
    <lineage>
        <taxon>Bacteria</taxon>
        <taxon>Pseudomonadati</taxon>
        <taxon>Acidobacteriota</taxon>
        <taxon>Terriglobia</taxon>
        <taxon>Terriglobales</taxon>
        <taxon>Candidatus Korobacteraceae</taxon>
        <taxon>Candidatus Korobacter</taxon>
    </lineage>
</organism>